<dbReference type="EMBL" id="CP000359">
    <property type="protein sequence ID" value="ABF45348.1"/>
    <property type="molecule type" value="Genomic_DNA"/>
</dbReference>
<dbReference type="RefSeq" id="WP_011530185.1">
    <property type="nucleotide sequence ID" value="NC_008025.1"/>
</dbReference>
<dbReference type="SMR" id="Q1IZI6"/>
<dbReference type="STRING" id="319795.Dgeo_1049"/>
<dbReference type="KEGG" id="dge:Dgeo_1049"/>
<dbReference type="eggNOG" id="COG0052">
    <property type="taxonomic scope" value="Bacteria"/>
</dbReference>
<dbReference type="HOGENOM" id="CLU_040318_2_3_0"/>
<dbReference type="Proteomes" id="UP000002431">
    <property type="component" value="Chromosome"/>
</dbReference>
<dbReference type="GO" id="GO:0022627">
    <property type="term" value="C:cytosolic small ribosomal subunit"/>
    <property type="evidence" value="ECO:0007669"/>
    <property type="project" value="TreeGrafter"/>
</dbReference>
<dbReference type="GO" id="GO:0003735">
    <property type="term" value="F:structural constituent of ribosome"/>
    <property type="evidence" value="ECO:0007669"/>
    <property type="project" value="InterPro"/>
</dbReference>
<dbReference type="GO" id="GO:0006412">
    <property type="term" value="P:translation"/>
    <property type="evidence" value="ECO:0007669"/>
    <property type="project" value="UniProtKB-UniRule"/>
</dbReference>
<dbReference type="CDD" id="cd01425">
    <property type="entry name" value="RPS2"/>
    <property type="match status" value="1"/>
</dbReference>
<dbReference type="FunFam" id="1.10.287.610:FF:000001">
    <property type="entry name" value="30S ribosomal protein S2"/>
    <property type="match status" value="1"/>
</dbReference>
<dbReference type="Gene3D" id="3.40.50.10490">
    <property type="entry name" value="Glucose-6-phosphate isomerase like protein, domain 1"/>
    <property type="match status" value="1"/>
</dbReference>
<dbReference type="Gene3D" id="1.10.287.610">
    <property type="entry name" value="Helix hairpin bin"/>
    <property type="match status" value="1"/>
</dbReference>
<dbReference type="HAMAP" id="MF_00291_B">
    <property type="entry name" value="Ribosomal_uS2_B"/>
    <property type="match status" value="1"/>
</dbReference>
<dbReference type="InterPro" id="IPR001865">
    <property type="entry name" value="Ribosomal_uS2"/>
</dbReference>
<dbReference type="InterPro" id="IPR005706">
    <property type="entry name" value="Ribosomal_uS2_bac/mit/plastid"/>
</dbReference>
<dbReference type="InterPro" id="IPR018130">
    <property type="entry name" value="Ribosomal_uS2_CS"/>
</dbReference>
<dbReference type="InterPro" id="IPR023591">
    <property type="entry name" value="Ribosomal_uS2_flav_dom_sf"/>
</dbReference>
<dbReference type="NCBIfam" id="TIGR01011">
    <property type="entry name" value="rpsB_bact"/>
    <property type="match status" value="1"/>
</dbReference>
<dbReference type="PANTHER" id="PTHR12534">
    <property type="entry name" value="30S RIBOSOMAL PROTEIN S2 PROKARYOTIC AND ORGANELLAR"/>
    <property type="match status" value="1"/>
</dbReference>
<dbReference type="PANTHER" id="PTHR12534:SF0">
    <property type="entry name" value="SMALL RIBOSOMAL SUBUNIT PROTEIN US2M"/>
    <property type="match status" value="1"/>
</dbReference>
<dbReference type="Pfam" id="PF00318">
    <property type="entry name" value="Ribosomal_S2"/>
    <property type="match status" value="1"/>
</dbReference>
<dbReference type="PRINTS" id="PR00395">
    <property type="entry name" value="RIBOSOMALS2"/>
</dbReference>
<dbReference type="SUPFAM" id="SSF52313">
    <property type="entry name" value="Ribosomal protein S2"/>
    <property type="match status" value="1"/>
</dbReference>
<dbReference type="PROSITE" id="PS00962">
    <property type="entry name" value="RIBOSOMAL_S2_1"/>
    <property type="match status" value="1"/>
</dbReference>
<dbReference type="PROSITE" id="PS00963">
    <property type="entry name" value="RIBOSOMAL_S2_2"/>
    <property type="match status" value="1"/>
</dbReference>
<sequence length="264" mass="29758">MSYISMKQLLEAGVHFGHETKRWNPKFKRFIFAERNGIFIIDLQKTLKQIDRSFDYIKDLAERGGVILFVGTKKQAQEIVELEARRTGMPYVTSRWLGGMLTNFRTIRTRIDRLNELDDMFESGRVNDRPKAERIELAAERERLLRFVGGIRKMTRLPDAIFVVDPTKEVIAVQEANKLGIPVIALADTDSDPDVIDYIVPGNDDAIRSIQLITHRIGDLIVEARGGGEDVSGERVSPDNADIEAAEDGEEVDNAQLTSSQGRS</sequence>
<reference key="1">
    <citation type="submission" date="2006-04" db="EMBL/GenBank/DDBJ databases">
        <title>Complete sequence of chromosome of Deinococcus geothermalis DSM 11300.</title>
        <authorList>
            <person name="Copeland A."/>
            <person name="Lucas S."/>
            <person name="Lapidus A."/>
            <person name="Barry K."/>
            <person name="Detter J.C."/>
            <person name="Glavina del Rio T."/>
            <person name="Hammon N."/>
            <person name="Israni S."/>
            <person name="Dalin E."/>
            <person name="Tice H."/>
            <person name="Pitluck S."/>
            <person name="Brettin T."/>
            <person name="Bruce D."/>
            <person name="Han C."/>
            <person name="Tapia R."/>
            <person name="Saunders E."/>
            <person name="Gilna P."/>
            <person name="Schmutz J."/>
            <person name="Larimer F."/>
            <person name="Land M."/>
            <person name="Hauser L."/>
            <person name="Kyrpides N."/>
            <person name="Kim E."/>
            <person name="Daly M.J."/>
            <person name="Fredrickson J.K."/>
            <person name="Makarova K.S."/>
            <person name="Gaidamakova E.K."/>
            <person name="Zhai M."/>
            <person name="Richardson P."/>
        </authorList>
    </citation>
    <scope>NUCLEOTIDE SEQUENCE [LARGE SCALE GENOMIC DNA]</scope>
    <source>
        <strain>DSM 11300 / CIP 105573 / AG-3a</strain>
    </source>
</reference>
<evidence type="ECO:0000255" key="1">
    <source>
        <dbReference type="HAMAP-Rule" id="MF_00291"/>
    </source>
</evidence>
<evidence type="ECO:0000256" key="2">
    <source>
        <dbReference type="SAM" id="MobiDB-lite"/>
    </source>
</evidence>
<evidence type="ECO:0000305" key="3"/>
<feature type="chain" id="PRO_1000003948" description="Small ribosomal subunit protein uS2">
    <location>
        <begin position="1"/>
        <end position="264"/>
    </location>
</feature>
<feature type="region of interest" description="Disordered" evidence="2">
    <location>
        <begin position="243"/>
        <end position="264"/>
    </location>
</feature>
<feature type="compositionally biased region" description="Acidic residues" evidence="2">
    <location>
        <begin position="243"/>
        <end position="253"/>
    </location>
</feature>
<feature type="compositionally biased region" description="Polar residues" evidence="2">
    <location>
        <begin position="255"/>
        <end position="264"/>
    </location>
</feature>
<proteinExistence type="inferred from homology"/>
<organism>
    <name type="scientific">Deinococcus geothermalis (strain DSM 11300 / CIP 105573 / AG-3a)</name>
    <dbReference type="NCBI Taxonomy" id="319795"/>
    <lineage>
        <taxon>Bacteria</taxon>
        <taxon>Thermotogati</taxon>
        <taxon>Deinococcota</taxon>
        <taxon>Deinococci</taxon>
        <taxon>Deinococcales</taxon>
        <taxon>Deinococcaceae</taxon>
        <taxon>Deinococcus</taxon>
    </lineage>
</organism>
<protein>
    <recommendedName>
        <fullName evidence="1">Small ribosomal subunit protein uS2</fullName>
    </recommendedName>
    <alternativeName>
        <fullName evidence="3">30S ribosomal protein S2</fullName>
    </alternativeName>
</protein>
<comment type="similarity">
    <text evidence="1">Belongs to the universal ribosomal protein uS2 family.</text>
</comment>
<name>RS2_DEIGD</name>
<accession>Q1IZI6</accession>
<gene>
    <name evidence="1" type="primary">rpsB</name>
    <name type="ordered locus">Dgeo_1049</name>
</gene>
<keyword id="KW-0687">Ribonucleoprotein</keyword>
<keyword id="KW-0689">Ribosomal protein</keyword>